<gene>
    <name type="primary">EFT1</name>
    <name type="ordered locus">CAGL0A03234g</name>
</gene>
<proteinExistence type="inferred from homology"/>
<comment type="function">
    <text evidence="1">Catalyzes the GTP-dependent ribosomal translocation step during translation elongation. During this step, the ribosome changes from the pre-translocational (PRE) to the post-translocational (POST) state as the newly formed A-site-bound peptidyl-tRNA and P-site-bound deacylated tRNA move to the P and E sites, respectively. Catalyzes the coordinated movement of the two tRNA molecules, the mRNA and conformational changes in the ribosome.</text>
</comment>
<comment type="catalytic activity">
    <reaction evidence="1">
        <text>GTP + H2O = GDP + phosphate + H(+)</text>
        <dbReference type="Rhea" id="RHEA:19669"/>
        <dbReference type="ChEBI" id="CHEBI:15377"/>
        <dbReference type="ChEBI" id="CHEBI:15378"/>
        <dbReference type="ChEBI" id="CHEBI:37565"/>
        <dbReference type="ChEBI" id="CHEBI:43474"/>
        <dbReference type="ChEBI" id="CHEBI:58189"/>
    </reaction>
    <physiologicalReaction direction="left-to-right" evidence="1">
        <dbReference type="Rhea" id="RHEA:19670"/>
    </physiologicalReaction>
</comment>
<comment type="subcellular location">
    <subcellularLocation>
        <location evidence="1">Cytoplasm</location>
    </subcellularLocation>
</comment>
<comment type="similarity">
    <text evidence="2">Belongs to the TRAFAC class translation factor GTPase superfamily. Classic translation factor GTPase family. EF-G/EF-2 subfamily.</text>
</comment>
<name>EF2_CANGA</name>
<feature type="chain" id="PRO_0000091016" description="Elongation factor 2">
    <location>
        <begin position="1"/>
        <end position="842"/>
    </location>
</feature>
<feature type="domain" description="tr-type G" evidence="2">
    <location>
        <begin position="17"/>
        <end position="346"/>
    </location>
</feature>
<feature type="binding site" evidence="1">
    <location>
        <begin position="26"/>
        <end position="33"/>
    </location>
    <ligand>
        <name>GTP</name>
        <dbReference type="ChEBI" id="CHEBI:37565"/>
    </ligand>
</feature>
<feature type="binding site" evidence="1">
    <location>
        <begin position="158"/>
        <end position="161"/>
    </location>
    <ligand>
        <name>GTP</name>
        <dbReference type="ChEBI" id="CHEBI:37565"/>
    </ligand>
</feature>
<feature type="binding site" evidence="1">
    <location>
        <begin position="213"/>
        <end position="215"/>
    </location>
    <ligand>
        <name>GTP</name>
        <dbReference type="ChEBI" id="CHEBI:37565"/>
    </ligand>
</feature>
<feature type="modified residue" description="Diphthamide" evidence="1">
    <location>
        <position position="699"/>
    </location>
</feature>
<evidence type="ECO:0000250" key="1">
    <source>
        <dbReference type="UniProtKB" id="P32324"/>
    </source>
</evidence>
<evidence type="ECO:0000255" key="2">
    <source>
        <dbReference type="PROSITE-ProRule" id="PRU01059"/>
    </source>
</evidence>
<keyword id="KW-0963">Cytoplasm</keyword>
<keyword id="KW-0251">Elongation factor</keyword>
<keyword id="KW-0342">GTP-binding</keyword>
<keyword id="KW-0378">Hydrolase</keyword>
<keyword id="KW-0547">Nucleotide-binding</keyword>
<keyword id="KW-0648">Protein biosynthesis</keyword>
<keyword id="KW-1185">Reference proteome</keyword>
<reference key="1">
    <citation type="journal article" date="2004" name="Nature">
        <title>Genome evolution in yeasts.</title>
        <authorList>
            <person name="Dujon B."/>
            <person name="Sherman D."/>
            <person name="Fischer G."/>
            <person name="Durrens P."/>
            <person name="Casaregola S."/>
            <person name="Lafontaine I."/>
            <person name="de Montigny J."/>
            <person name="Marck C."/>
            <person name="Neuveglise C."/>
            <person name="Talla E."/>
            <person name="Goffard N."/>
            <person name="Frangeul L."/>
            <person name="Aigle M."/>
            <person name="Anthouard V."/>
            <person name="Babour A."/>
            <person name="Barbe V."/>
            <person name="Barnay S."/>
            <person name="Blanchin S."/>
            <person name="Beckerich J.-M."/>
            <person name="Beyne E."/>
            <person name="Bleykasten C."/>
            <person name="Boisrame A."/>
            <person name="Boyer J."/>
            <person name="Cattolico L."/>
            <person name="Confanioleri F."/>
            <person name="de Daruvar A."/>
            <person name="Despons L."/>
            <person name="Fabre E."/>
            <person name="Fairhead C."/>
            <person name="Ferry-Dumazet H."/>
            <person name="Groppi A."/>
            <person name="Hantraye F."/>
            <person name="Hennequin C."/>
            <person name="Jauniaux N."/>
            <person name="Joyet P."/>
            <person name="Kachouri R."/>
            <person name="Kerrest A."/>
            <person name="Koszul R."/>
            <person name="Lemaire M."/>
            <person name="Lesur I."/>
            <person name="Ma L."/>
            <person name="Muller H."/>
            <person name="Nicaud J.-M."/>
            <person name="Nikolski M."/>
            <person name="Oztas S."/>
            <person name="Ozier-Kalogeropoulos O."/>
            <person name="Pellenz S."/>
            <person name="Potier S."/>
            <person name="Richard G.-F."/>
            <person name="Straub M.-L."/>
            <person name="Suleau A."/>
            <person name="Swennen D."/>
            <person name="Tekaia F."/>
            <person name="Wesolowski-Louvel M."/>
            <person name="Westhof E."/>
            <person name="Wirth B."/>
            <person name="Zeniou-Meyer M."/>
            <person name="Zivanovic Y."/>
            <person name="Bolotin-Fukuhara M."/>
            <person name="Thierry A."/>
            <person name="Bouchier C."/>
            <person name="Caudron B."/>
            <person name="Scarpelli C."/>
            <person name="Gaillardin C."/>
            <person name="Weissenbach J."/>
            <person name="Wincker P."/>
            <person name="Souciet J.-L."/>
        </authorList>
    </citation>
    <scope>NUCLEOTIDE SEQUENCE [LARGE SCALE GENOMIC DNA]</scope>
    <source>
        <strain>ATCC 2001 / BCRC 20586 / JCM 3761 / NBRC 0622 / NRRL Y-65 / CBS 138</strain>
    </source>
</reference>
<protein>
    <recommendedName>
        <fullName>Elongation factor 2</fullName>
        <shortName>EF-2</shortName>
        <ecNumber evidence="1">3.6.5.-</ecNumber>
    </recommendedName>
</protein>
<dbReference type="EC" id="3.6.5.-" evidence="1"/>
<dbReference type="EMBL" id="CR380947">
    <property type="protein sequence ID" value="CAG57801.1"/>
    <property type="molecule type" value="Genomic_DNA"/>
</dbReference>
<dbReference type="SMR" id="Q6FYA7"/>
<dbReference type="FunCoup" id="Q6FYA7">
    <property type="interactions" value="1361"/>
</dbReference>
<dbReference type="STRING" id="284593.Q6FYA7"/>
<dbReference type="EnsemblFungi" id="CAGL0A03234g-T">
    <property type="protein sequence ID" value="CAGL0A03234g-T-p1"/>
    <property type="gene ID" value="CAGL0A03234g"/>
</dbReference>
<dbReference type="KEGG" id="cgr:2886326"/>
<dbReference type="CGD" id="CAL0126687">
    <property type="gene designation" value="EFT2"/>
</dbReference>
<dbReference type="VEuPathDB" id="FungiDB:B1J91_A03234g"/>
<dbReference type="VEuPathDB" id="FungiDB:CAGL0A03234g"/>
<dbReference type="eggNOG" id="KOG0469">
    <property type="taxonomic scope" value="Eukaryota"/>
</dbReference>
<dbReference type="HOGENOM" id="CLU_002794_11_2_1"/>
<dbReference type="InParanoid" id="Q6FYA7"/>
<dbReference type="OMA" id="ASWNTEN"/>
<dbReference type="Proteomes" id="UP000002428">
    <property type="component" value="Chromosome A"/>
</dbReference>
<dbReference type="GO" id="GO:0005829">
    <property type="term" value="C:cytosol"/>
    <property type="evidence" value="ECO:0007669"/>
    <property type="project" value="TreeGrafter"/>
</dbReference>
<dbReference type="GO" id="GO:0062040">
    <property type="term" value="C:fungal biofilm matrix"/>
    <property type="evidence" value="ECO:0000314"/>
    <property type="project" value="CGD"/>
</dbReference>
<dbReference type="GO" id="GO:1990904">
    <property type="term" value="C:ribonucleoprotein complex"/>
    <property type="evidence" value="ECO:0007669"/>
    <property type="project" value="TreeGrafter"/>
</dbReference>
<dbReference type="GO" id="GO:0005525">
    <property type="term" value="F:GTP binding"/>
    <property type="evidence" value="ECO:0007669"/>
    <property type="project" value="UniProtKB-KW"/>
</dbReference>
<dbReference type="GO" id="GO:0003924">
    <property type="term" value="F:GTPase activity"/>
    <property type="evidence" value="ECO:0007669"/>
    <property type="project" value="InterPro"/>
</dbReference>
<dbReference type="GO" id="GO:0043022">
    <property type="term" value="F:ribosome binding"/>
    <property type="evidence" value="ECO:0007669"/>
    <property type="project" value="TreeGrafter"/>
</dbReference>
<dbReference type="GO" id="GO:0003746">
    <property type="term" value="F:translation elongation factor activity"/>
    <property type="evidence" value="ECO:0007669"/>
    <property type="project" value="UniProtKB-KW"/>
</dbReference>
<dbReference type="CDD" id="cd01681">
    <property type="entry name" value="aeEF2_snRNP_like_IV"/>
    <property type="match status" value="1"/>
</dbReference>
<dbReference type="CDD" id="cd04096">
    <property type="entry name" value="eEF2_snRNP_like_C"/>
    <property type="match status" value="1"/>
</dbReference>
<dbReference type="CDD" id="cd01885">
    <property type="entry name" value="EF2"/>
    <property type="match status" value="1"/>
</dbReference>
<dbReference type="CDD" id="cd16261">
    <property type="entry name" value="EF2_snRNP_III"/>
    <property type="match status" value="1"/>
</dbReference>
<dbReference type="CDD" id="cd03700">
    <property type="entry name" value="EF2_snRNP_like_II"/>
    <property type="match status" value="1"/>
</dbReference>
<dbReference type="FunFam" id="2.40.30.10:FF:000010">
    <property type="entry name" value="Translation elongation factor 2"/>
    <property type="match status" value="1"/>
</dbReference>
<dbReference type="FunFam" id="3.30.230.10:FF:000006">
    <property type="entry name" value="Translation elongation factor 2"/>
    <property type="match status" value="1"/>
</dbReference>
<dbReference type="FunFam" id="3.30.70.240:FF:000003">
    <property type="entry name" value="Translation elongation factor 2"/>
    <property type="match status" value="1"/>
</dbReference>
<dbReference type="FunFam" id="3.30.70.870:FF:000002">
    <property type="entry name" value="Translation elongation factor 2"/>
    <property type="match status" value="1"/>
</dbReference>
<dbReference type="FunFam" id="3.40.50.300:FF:000058">
    <property type="entry name" value="Translation elongation factor 2"/>
    <property type="match status" value="1"/>
</dbReference>
<dbReference type="Gene3D" id="3.30.230.10">
    <property type="match status" value="1"/>
</dbReference>
<dbReference type="Gene3D" id="3.30.70.240">
    <property type="match status" value="1"/>
</dbReference>
<dbReference type="Gene3D" id="3.30.70.870">
    <property type="entry name" value="Elongation Factor G (Translational Gtpase), domain 3"/>
    <property type="match status" value="1"/>
</dbReference>
<dbReference type="Gene3D" id="3.40.50.300">
    <property type="entry name" value="P-loop containing nucleotide triphosphate hydrolases"/>
    <property type="match status" value="1"/>
</dbReference>
<dbReference type="Gene3D" id="2.40.30.10">
    <property type="entry name" value="Translation factors"/>
    <property type="match status" value="1"/>
</dbReference>
<dbReference type="InterPro" id="IPR041095">
    <property type="entry name" value="EFG_II"/>
</dbReference>
<dbReference type="InterPro" id="IPR035647">
    <property type="entry name" value="EFG_III/V"/>
</dbReference>
<dbReference type="InterPro" id="IPR000640">
    <property type="entry name" value="EFG_V-like"/>
</dbReference>
<dbReference type="InterPro" id="IPR004161">
    <property type="entry name" value="EFTu-like_2"/>
</dbReference>
<dbReference type="InterPro" id="IPR031157">
    <property type="entry name" value="G_TR_CS"/>
</dbReference>
<dbReference type="InterPro" id="IPR027417">
    <property type="entry name" value="P-loop_NTPase"/>
</dbReference>
<dbReference type="InterPro" id="IPR020568">
    <property type="entry name" value="Ribosomal_Su5_D2-typ_SF"/>
</dbReference>
<dbReference type="InterPro" id="IPR014721">
    <property type="entry name" value="Ribsml_uS5_D2-typ_fold_subgr"/>
</dbReference>
<dbReference type="InterPro" id="IPR005225">
    <property type="entry name" value="Small_GTP-bd"/>
</dbReference>
<dbReference type="InterPro" id="IPR000795">
    <property type="entry name" value="T_Tr_GTP-bd_dom"/>
</dbReference>
<dbReference type="InterPro" id="IPR009000">
    <property type="entry name" value="Transl_B-barrel_sf"/>
</dbReference>
<dbReference type="InterPro" id="IPR005517">
    <property type="entry name" value="Transl_elong_EFG/EF2_IV"/>
</dbReference>
<dbReference type="NCBIfam" id="TIGR00231">
    <property type="entry name" value="small_GTP"/>
    <property type="match status" value="1"/>
</dbReference>
<dbReference type="PANTHER" id="PTHR42908:SF10">
    <property type="entry name" value="EUKARYOTIC TRANSLATION ELONGATION FACTOR 2"/>
    <property type="match status" value="1"/>
</dbReference>
<dbReference type="PANTHER" id="PTHR42908">
    <property type="entry name" value="TRANSLATION ELONGATION FACTOR-RELATED"/>
    <property type="match status" value="1"/>
</dbReference>
<dbReference type="Pfam" id="PF00679">
    <property type="entry name" value="EFG_C"/>
    <property type="match status" value="1"/>
</dbReference>
<dbReference type="Pfam" id="PF14492">
    <property type="entry name" value="EFG_III"/>
    <property type="match status" value="1"/>
</dbReference>
<dbReference type="Pfam" id="PF03764">
    <property type="entry name" value="EFG_IV"/>
    <property type="match status" value="1"/>
</dbReference>
<dbReference type="Pfam" id="PF00009">
    <property type="entry name" value="GTP_EFTU"/>
    <property type="match status" value="1"/>
</dbReference>
<dbReference type="Pfam" id="PF03144">
    <property type="entry name" value="GTP_EFTU_D2"/>
    <property type="match status" value="1"/>
</dbReference>
<dbReference type="PRINTS" id="PR00315">
    <property type="entry name" value="ELONGATNFCT"/>
</dbReference>
<dbReference type="SMART" id="SM00838">
    <property type="entry name" value="EFG_C"/>
    <property type="match status" value="1"/>
</dbReference>
<dbReference type="SMART" id="SM00889">
    <property type="entry name" value="EFG_IV"/>
    <property type="match status" value="1"/>
</dbReference>
<dbReference type="SUPFAM" id="SSF54980">
    <property type="entry name" value="EF-G C-terminal domain-like"/>
    <property type="match status" value="2"/>
</dbReference>
<dbReference type="SUPFAM" id="SSF52540">
    <property type="entry name" value="P-loop containing nucleoside triphosphate hydrolases"/>
    <property type="match status" value="1"/>
</dbReference>
<dbReference type="SUPFAM" id="SSF54211">
    <property type="entry name" value="Ribosomal protein S5 domain 2-like"/>
    <property type="match status" value="1"/>
</dbReference>
<dbReference type="SUPFAM" id="SSF50447">
    <property type="entry name" value="Translation proteins"/>
    <property type="match status" value="1"/>
</dbReference>
<dbReference type="PROSITE" id="PS00301">
    <property type="entry name" value="G_TR_1"/>
    <property type="match status" value="1"/>
</dbReference>
<dbReference type="PROSITE" id="PS51722">
    <property type="entry name" value="G_TR_2"/>
    <property type="match status" value="1"/>
</dbReference>
<sequence length="842" mass="93329">MVAFTVDQMRSLMDKVTNVRNMSVIAHVDHGKSTLTDSLVQKAGIISAAKAGEARFMDTRKDEQERGITIKSTAISLYSDLPEEDVKEIPQKSDGNSFLINLIDSPGHVDFSSEVTAALRVTDGALVVVDTVEGVCVQTETVLRQALGERIKPVVCINKVDRALLELQVSKEDLYQSFSRTVESVNVIISTYSDEVLGDVQVYPSKGTVAFGSGLHGWAFTIRQFATRYAKKFGVDKQKMMERLWGDSFFNPKTKKWTNKETDTDGKPLERAFNMFVLDPIFRLFAAIMNFKKDEIPTLLEKLEINLKSDEKDLEGKALLKVVMRKFLPAADALLEMIVMHLPSPVTAQNYRAEQLYEGPADDANCIAIKKCDPTADLMLYVSKMVPTSDKGRFYAFGRVFAGTVKSGQKIRIQGPNYVPGKKDDLFLKAVQRVVLMMGSRVEPIDDCPAGNIVGLVGIDQFLLKTGTLTTSETAYNMKVMKFSVSPVVQVAVDVKNANDLPKLVEGLKRLSKSDPCVLTQMSESGEHIVAGTGELHLEICLQDLENEHAGIPLKISPPVVAYRETVEAESSQVALSKSPNKHNRIYLKAEPMDEEVSLAIEQGKINPRDDFKARARVMADEYGWDVTDARKIWCFGPDGNGPNLVVDQTKAVQYLNEIKDSVVSAFQWATKEGPILGETMRSVRVNILDVTLHADAIHRGAGQIMPTMRRATYAGFLLAEPKIQEPVFLVEIQCPEQAVGGIYSVLNKKRGQVVSEEQRPGTPLFTVKAYLPVNESFGFTGELRQATGGQAFPQMVFDHWATLNSDPLDPTSKAGEIVTAARKRHGMKEEVPGWQEYYDKL</sequence>
<accession>Q6FYA7</accession>
<organism>
    <name type="scientific">Candida glabrata (strain ATCC 2001 / BCRC 20586 / JCM 3761 / NBRC 0622 / NRRL Y-65 / CBS 138)</name>
    <name type="common">Yeast</name>
    <name type="synonym">Nakaseomyces glabratus</name>
    <dbReference type="NCBI Taxonomy" id="284593"/>
    <lineage>
        <taxon>Eukaryota</taxon>
        <taxon>Fungi</taxon>
        <taxon>Dikarya</taxon>
        <taxon>Ascomycota</taxon>
        <taxon>Saccharomycotina</taxon>
        <taxon>Saccharomycetes</taxon>
        <taxon>Saccharomycetales</taxon>
        <taxon>Saccharomycetaceae</taxon>
        <taxon>Nakaseomyces</taxon>
    </lineage>
</organism>